<organism>
    <name type="scientific">Mus musculus</name>
    <name type="common">Mouse</name>
    <dbReference type="NCBI Taxonomy" id="10090"/>
    <lineage>
        <taxon>Eukaryota</taxon>
        <taxon>Metazoa</taxon>
        <taxon>Chordata</taxon>
        <taxon>Craniata</taxon>
        <taxon>Vertebrata</taxon>
        <taxon>Euteleostomi</taxon>
        <taxon>Mammalia</taxon>
        <taxon>Eutheria</taxon>
        <taxon>Euarchontoglires</taxon>
        <taxon>Glires</taxon>
        <taxon>Rodentia</taxon>
        <taxon>Myomorpha</taxon>
        <taxon>Muroidea</taxon>
        <taxon>Muridae</taxon>
        <taxon>Murinae</taxon>
        <taxon>Mus</taxon>
        <taxon>Mus</taxon>
    </lineage>
</organism>
<protein>
    <recommendedName>
        <fullName>Eukaryotic translation initiation factor 1</fullName>
        <shortName>eIF1</shortName>
    </recommendedName>
    <alternativeName>
        <fullName>Protein translation factor SUI1 homolog</fullName>
    </alternativeName>
</protein>
<proteinExistence type="evidence at protein level"/>
<keyword id="KW-0007">Acetylation</keyword>
<keyword id="KW-0963">Cytoplasm</keyword>
<keyword id="KW-0396">Initiation factor</keyword>
<keyword id="KW-0597">Phosphoprotein</keyword>
<keyword id="KW-0648">Protein biosynthesis</keyword>
<keyword id="KW-1185">Reference proteome</keyword>
<sequence length="113" mass="12747">MSAIQNLHSFDPFADASKGDDLLPAGTEDYIHIRIQQRNGRKTLTTVQGIADDYDKKKLVKAFKKKFACNGTVIEHPEYGEVIQLQGDQRKNICQFLIEIGLAKDDQLKVHGF</sequence>
<dbReference type="EMBL" id="AF129888">
    <property type="protein sequence ID" value="AAD31266.1"/>
    <property type="molecule type" value="mRNA"/>
</dbReference>
<dbReference type="EMBL" id="BC003463">
    <property type="protein sequence ID" value="AAH03463.1"/>
    <property type="molecule type" value="mRNA"/>
</dbReference>
<dbReference type="EMBL" id="BC010791">
    <property type="protein sequence ID" value="AAH10791.1"/>
    <property type="molecule type" value="mRNA"/>
</dbReference>
<dbReference type="EMBL" id="BC081429">
    <property type="protein sequence ID" value="AAH81429.1"/>
    <property type="molecule type" value="mRNA"/>
</dbReference>
<dbReference type="EMBL" id="Z50159">
    <property type="protein sequence ID" value="CAA90519.1"/>
    <property type="molecule type" value="mRNA"/>
</dbReference>
<dbReference type="CCDS" id="CCDS25417.1"/>
<dbReference type="PIR" id="S58180">
    <property type="entry name" value="S58180"/>
</dbReference>
<dbReference type="RefSeq" id="NP_035638.1">
    <property type="nucleotide sequence ID" value="NM_011508.2"/>
</dbReference>
<dbReference type="BMRB" id="P48024"/>
<dbReference type="SMR" id="P48024"/>
<dbReference type="BioGRID" id="203572">
    <property type="interactions" value="10"/>
</dbReference>
<dbReference type="CORUM" id="P48024"/>
<dbReference type="FunCoup" id="P48024">
    <property type="interactions" value="2526"/>
</dbReference>
<dbReference type="IntAct" id="P48024">
    <property type="interactions" value="1"/>
</dbReference>
<dbReference type="STRING" id="10090.ENSMUSP00000041538"/>
<dbReference type="iPTMnet" id="P48024"/>
<dbReference type="PhosphoSitePlus" id="P48024"/>
<dbReference type="SwissPalm" id="P48024"/>
<dbReference type="jPOST" id="P48024"/>
<dbReference type="PaxDb" id="10090-ENSMUSP00000041538"/>
<dbReference type="PeptideAtlas" id="P48024"/>
<dbReference type="ProteomicsDB" id="277773"/>
<dbReference type="Pumba" id="P48024"/>
<dbReference type="Antibodypedia" id="28894">
    <property type="antibodies" value="209 antibodies from 30 providers"/>
</dbReference>
<dbReference type="Ensembl" id="ENSMUST00000049385.14">
    <property type="protein sequence ID" value="ENSMUSP00000041538.8"/>
    <property type="gene ID" value="ENSMUSG00000035530.14"/>
</dbReference>
<dbReference type="GeneID" id="20918"/>
<dbReference type="KEGG" id="mmu:20918"/>
<dbReference type="UCSC" id="uc007lkv.1">
    <property type="organism name" value="mouse"/>
</dbReference>
<dbReference type="AGR" id="MGI:105125"/>
<dbReference type="CTD" id="10209"/>
<dbReference type="MGI" id="MGI:105125">
    <property type="gene designation" value="Eif1"/>
</dbReference>
<dbReference type="VEuPathDB" id="HostDB:ENSMUSG00000035530"/>
<dbReference type="eggNOG" id="KOG1770">
    <property type="taxonomic scope" value="Eukaryota"/>
</dbReference>
<dbReference type="GeneTree" id="ENSGT00390000015789"/>
<dbReference type="HOGENOM" id="CLU_082805_3_0_1"/>
<dbReference type="InParanoid" id="P48024"/>
<dbReference type="OMA" id="VENHIHI"/>
<dbReference type="OrthoDB" id="10248435at2759"/>
<dbReference type="PhylomeDB" id="P48024"/>
<dbReference type="TreeFam" id="TF314417"/>
<dbReference type="BioGRID-ORCS" id="20918">
    <property type="hits" value="16 hits in 43 CRISPR screens"/>
</dbReference>
<dbReference type="ChiTaRS" id="Eif1">
    <property type="organism name" value="mouse"/>
</dbReference>
<dbReference type="PRO" id="PR:P48024"/>
<dbReference type="Proteomes" id="UP000000589">
    <property type="component" value="Chromosome 11"/>
</dbReference>
<dbReference type="RNAct" id="P48024">
    <property type="molecule type" value="protein"/>
</dbReference>
<dbReference type="Bgee" id="ENSMUSG00000035530">
    <property type="expression patterns" value="Expressed in metanephric ureteric bud and 264 other cell types or tissues"/>
</dbReference>
<dbReference type="ExpressionAtlas" id="P48024">
    <property type="expression patterns" value="baseline and differential"/>
</dbReference>
<dbReference type="GO" id="GO:0005737">
    <property type="term" value="C:cytoplasm"/>
    <property type="evidence" value="ECO:0007669"/>
    <property type="project" value="UniProtKB-SubCell"/>
</dbReference>
<dbReference type="GO" id="GO:0003743">
    <property type="term" value="F:translation initiation factor activity"/>
    <property type="evidence" value="ECO:0007669"/>
    <property type="project" value="UniProtKB-KW"/>
</dbReference>
<dbReference type="GO" id="GO:1905746">
    <property type="term" value="P:positive regulation of mRNA cis splicing, via spliceosome"/>
    <property type="evidence" value="ECO:0000315"/>
    <property type="project" value="MGI"/>
</dbReference>
<dbReference type="CDD" id="cd11566">
    <property type="entry name" value="eIF1_SUI1"/>
    <property type="match status" value="1"/>
</dbReference>
<dbReference type="FunFam" id="3.30.780.10:FF:000003">
    <property type="entry name" value="Eukaryotic translation initiation factor 1b"/>
    <property type="match status" value="1"/>
</dbReference>
<dbReference type="Gene3D" id="3.30.780.10">
    <property type="entry name" value="SUI1-like domain"/>
    <property type="match status" value="1"/>
</dbReference>
<dbReference type="InterPro" id="IPR001950">
    <property type="entry name" value="SUI1"/>
</dbReference>
<dbReference type="InterPro" id="IPR036877">
    <property type="entry name" value="SUI1_dom_sf"/>
</dbReference>
<dbReference type="InterPro" id="IPR005874">
    <property type="entry name" value="SUI1_euk"/>
</dbReference>
<dbReference type="NCBIfam" id="TIGR01160">
    <property type="entry name" value="SUI1_MOF2"/>
    <property type="match status" value="1"/>
</dbReference>
<dbReference type="PANTHER" id="PTHR10388">
    <property type="entry name" value="EUKARYOTIC TRANSLATION INITIATION FACTOR SUI1"/>
    <property type="match status" value="1"/>
</dbReference>
<dbReference type="Pfam" id="PF01253">
    <property type="entry name" value="SUI1"/>
    <property type="match status" value="1"/>
</dbReference>
<dbReference type="PIRSF" id="PIRSF004499">
    <property type="entry name" value="SUI1_euk"/>
    <property type="match status" value="1"/>
</dbReference>
<dbReference type="SUPFAM" id="SSF55159">
    <property type="entry name" value="eIF1-like"/>
    <property type="match status" value="1"/>
</dbReference>
<dbReference type="PROSITE" id="PS50296">
    <property type="entry name" value="SUI1"/>
    <property type="match status" value="1"/>
</dbReference>
<gene>
    <name type="primary">Eif1</name>
    <name type="synonym">Sui1</name>
    <name type="synonym">Sui1-rs1</name>
</gene>
<comment type="function">
    <text evidence="1">Component of the 43S pre-initiation complex (43S PIC), which binds to the mRNA cap-proximal region, scans mRNA 5'-untranslated region, and locates the initiation codon. Together with eIF1A (EIF1AX), EIF1 facilitates scanning and is essential for start codon recognition on the basis of AUG nucleotide context and location relative to the 5'-cap. Participates to initiation codon selection by influencing the conformation of the 40S ribosomal subunit and the positions of bound mRNA and initiator tRNA; this is possible after its binding to the interface surface of the platform of the 40S ribosomal subunit close to the P-site. Together with eIF1A (EIF1AX), also regulates the opening and closing of the mRNA binding channel, which ensures mRNA recruitment, scanning and the fidelity of initiation codon selection. Continuously monitors and protects against premature and partial base-pairing of codons in the 5'-UTR with the anticodon of initiator tRNA. Together with eIF1A (EIF1AX), acts for ribosomal scanning, promotion of the assembly of 48S complex at the initiation codon (43S PIC becomes 48S PIC after the start codon is reached), and dissociation of aberrant complexes. Interacts with EIF4G1, which in a mutual exclusive interaction associates either with EIF1 or with EIF4E on a common binding site. EIF4G1-EIF1 complex promotes ribosome scanning (on both short and long 5'UTR), leaky scanning (on short 5'UTR) which is the bypass of the initial start codon, and discrimination against cap-proximal AUG. Is probably maintained within the 43S PIC in open conformation thanks to eIF1A-EIF5 interaction. Once the correct start codon is reached, EIF1 is physically excluded from the decoding site, shifting the PIC into the closed conformation and arresting it at the start codon.</text>
</comment>
<comment type="subunit">
    <text evidence="1">Component of the 43S pre-initiation complex (43S PIC), which is composed of the 40S ribosomal subunit, EIF1, eIF1A (EIF1AX), eIF3 complex, EIF5 and eIF2-GTP-initiator tRNA complex (eIF2 ternary complex). Interacts with EIF4G1; in specific 5'-UTR length and AUG context. Interacts with EIF5; which in a mutual exclusive interaction associates either with EIF1 or with EIF2S2 on a common binding site. Interacts with RENT2.</text>
</comment>
<comment type="subcellular location">
    <subcellularLocation>
        <location evidence="1">Cytoplasm</location>
    </subcellularLocation>
</comment>
<comment type="similarity">
    <text evidence="2">Belongs to the SUI1 family.</text>
</comment>
<evidence type="ECO:0000250" key="1">
    <source>
        <dbReference type="UniProtKB" id="P41567"/>
    </source>
</evidence>
<evidence type="ECO:0000305" key="2"/>
<reference key="1">
    <citation type="submission" date="1999-02" db="EMBL/GenBank/DDBJ databases">
        <title>Differentially expressed genes in branching tubulogenesis.</title>
        <authorList>
            <person name="Li Z."/>
            <person name="Stuart R.O."/>
            <person name="Nigam S.K."/>
        </authorList>
    </citation>
    <scope>NUCLEOTIDE SEQUENCE [MRNA]</scope>
    <source>
        <tissue>Ureteric bud</tissue>
    </source>
</reference>
<reference key="2">
    <citation type="journal article" date="2004" name="Genome Res.">
        <title>The status, quality, and expansion of the NIH full-length cDNA project: the Mammalian Gene Collection (MGC).</title>
        <authorList>
            <consortium name="The MGC Project Team"/>
        </authorList>
    </citation>
    <scope>NUCLEOTIDE SEQUENCE [LARGE SCALE MRNA]</scope>
    <source>
        <strain>C57BL/6J</strain>
        <strain>FVB/N</strain>
        <tissue>Brain</tissue>
        <tissue>Colon</tissue>
        <tissue>Mammary tumor</tissue>
    </source>
</reference>
<reference key="3">
    <citation type="journal article" date="1996" name="Mamm. Genome">
        <title>Multiple translation initiation factor Sui1 related sequences in mammalian genomes.</title>
        <authorList>
            <person name="Purohit R."/>
            <person name="McCormick D."/>
            <person name="Dyson J."/>
        </authorList>
    </citation>
    <scope>NUCLEOTIDE SEQUENCE [MRNA] OF 38-113</scope>
    <source>
        <strain>DBA/2J</strain>
    </source>
</reference>
<reference key="4">
    <citation type="journal article" date="2010" name="Cell">
        <title>A tissue-specific atlas of mouse protein phosphorylation and expression.</title>
        <authorList>
            <person name="Huttlin E.L."/>
            <person name="Jedrychowski M.P."/>
            <person name="Elias J.E."/>
            <person name="Goswami T."/>
            <person name="Rad R."/>
            <person name="Beausoleil S.A."/>
            <person name="Villen J."/>
            <person name="Haas W."/>
            <person name="Sowa M.E."/>
            <person name="Gygi S.P."/>
        </authorList>
    </citation>
    <scope>IDENTIFICATION BY MASS SPECTROMETRY [LARGE SCALE ANALYSIS]</scope>
    <source>
        <tissue>Brain</tissue>
        <tissue>Brown adipose tissue</tissue>
        <tissue>Kidney</tissue>
        <tissue>Liver</tissue>
        <tissue>Pancreas</tissue>
        <tissue>Spleen</tissue>
        <tissue>Testis</tissue>
    </source>
</reference>
<feature type="initiator methionine" description="Removed" evidence="1">
    <location>
        <position position="1"/>
    </location>
</feature>
<feature type="chain" id="PRO_0000130555" description="Eukaryotic translation initiation factor 1">
    <location>
        <begin position="2"/>
        <end position="113"/>
    </location>
</feature>
<feature type="site" description="Binds 40S ribosomal subunit" evidence="1">
    <location>
        <position position="41"/>
    </location>
</feature>
<feature type="site" description="Binds 40S ribosomal subunit" evidence="1">
    <location>
        <position position="65"/>
    </location>
</feature>
<feature type="modified residue" description="N-acetylserine" evidence="1">
    <location>
        <position position="2"/>
    </location>
</feature>
<feature type="modified residue" description="Phosphoserine" evidence="1">
    <location>
        <position position="2"/>
    </location>
</feature>
<feature type="modified residue" description="Phosphoserine" evidence="1">
    <location>
        <position position="9"/>
    </location>
</feature>
<name>EIF1_MOUSE</name>
<accession>P48024</accession>
<accession>Q9WUD5</accession>